<gene>
    <name evidence="1" type="primary">rpsR</name>
    <name type="ordered locus">COPRO5265_0618</name>
</gene>
<reference key="1">
    <citation type="submission" date="2008-08" db="EMBL/GenBank/DDBJ databases">
        <title>The complete genome sequence of Coprothermobacter proteolyticus strain ATCC 5245 / DSM 5265 / BT.</title>
        <authorList>
            <person name="Dodson R.J."/>
            <person name="Durkin A.S."/>
            <person name="Wu M."/>
            <person name="Eisen J."/>
            <person name="Sutton G."/>
        </authorList>
    </citation>
    <scope>NUCLEOTIDE SEQUENCE [LARGE SCALE GENOMIC DNA]</scope>
    <source>
        <strain>ATCC 35245 / DSM 5265 / OCM 4 / BT</strain>
    </source>
</reference>
<feature type="chain" id="PRO_1000114414" description="Small ribosomal subunit protein bS18">
    <location>
        <begin position="1"/>
        <end position="74"/>
    </location>
</feature>
<sequence>MPVQRKRRIKLCPLCADGVREVDYKDVNRLRRFTSDRGKILPRRVTGVCAFHQRSLSRAIKRAREMALLPYVMQ</sequence>
<name>RS18_COPPD</name>
<keyword id="KW-1185">Reference proteome</keyword>
<keyword id="KW-0687">Ribonucleoprotein</keyword>
<keyword id="KW-0689">Ribosomal protein</keyword>
<keyword id="KW-0694">RNA-binding</keyword>
<keyword id="KW-0699">rRNA-binding</keyword>
<proteinExistence type="inferred from homology"/>
<dbReference type="EMBL" id="CP001145">
    <property type="protein sequence ID" value="ACI16996.1"/>
    <property type="molecule type" value="Genomic_DNA"/>
</dbReference>
<dbReference type="RefSeq" id="WP_012543648.1">
    <property type="nucleotide sequence ID" value="NC_011295.1"/>
</dbReference>
<dbReference type="SMR" id="B5Y876"/>
<dbReference type="STRING" id="309798.COPRO5265_0618"/>
<dbReference type="KEGG" id="cpo:COPRO5265_0618"/>
<dbReference type="eggNOG" id="COG0238">
    <property type="taxonomic scope" value="Bacteria"/>
</dbReference>
<dbReference type="HOGENOM" id="CLU_148710_2_2_9"/>
<dbReference type="OrthoDB" id="9812008at2"/>
<dbReference type="Proteomes" id="UP000001732">
    <property type="component" value="Chromosome"/>
</dbReference>
<dbReference type="GO" id="GO:0022627">
    <property type="term" value="C:cytosolic small ribosomal subunit"/>
    <property type="evidence" value="ECO:0007669"/>
    <property type="project" value="TreeGrafter"/>
</dbReference>
<dbReference type="GO" id="GO:0070181">
    <property type="term" value="F:small ribosomal subunit rRNA binding"/>
    <property type="evidence" value="ECO:0007669"/>
    <property type="project" value="TreeGrafter"/>
</dbReference>
<dbReference type="GO" id="GO:0003735">
    <property type="term" value="F:structural constituent of ribosome"/>
    <property type="evidence" value="ECO:0007669"/>
    <property type="project" value="InterPro"/>
</dbReference>
<dbReference type="GO" id="GO:0006412">
    <property type="term" value="P:translation"/>
    <property type="evidence" value="ECO:0007669"/>
    <property type="project" value="UniProtKB-UniRule"/>
</dbReference>
<dbReference type="Gene3D" id="4.10.640.10">
    <property type="entry name" value="Ribosomal protein S18"/>
    <property type="match status" value="1"/>
</dbReference>
<dbReference type="HAMAP" id="MF_00270">
    <property type="entry name" value="Ribosomal_bS18"/>
    <property type="match status" value="1"/>
</dbReference>
<dbReference type="InterPro" id="IPR001648">
    <property type="entry name" value="Ribosomal_bS18"/>
</dbReference>
<dbReference type="InterPro" id="IPR018275">
    <property type="entry name" value="Ribosomal_bS18_CS"/>
</dbReference>
<dbReference type="InterPro" id="IPR036870">
    <property type="entry name" value="Ribosomal_bS18_sf"/>
</dbReference>
<dbReference type="NCBIfam" id="TIGR00165">
    <property type="entry name" value="S18"/>
    <property type="match status" value="1"/>
</dbReference>
<dbReference type="PANTHER" id="PTHR13479">
    <property type="entry name" value="30S RIBOSOMAL PROTEIN S18"/>
    <property type="match status" value="1"/>
</dbReference>
<dbReference type="PANTHER" id="PTHR13479:SF40">
    <property type="entry name" value="SMALL RIBOSOMAL SUBUNIT PROTEIN BS18M"/>
    <property type="match status" value="1"/>
</dbReference>
<dbReference type="Pfam" id="PF01084">
    <property type="entry name" value="Ribosomal_S18"/>
    <property type="match status" value="1"/>
</dbReference>
<dbReference type="PRINTS" id="PR00974">
    <property type="entry name" value="RIBOSOMALS18"/>
</dbReference>
<dbReference type="SUPFAM" id="SSF46911">
    <property type="entry name" value="Ribosomal protein S18"/>
    <property type="match status" value="1"/>
</dbReference>
<dbReference type="PROSITE" id="PS00057">
    <property type="entry name" value="RIBOSOMAL_S18"/>
    <property type="match status" value="1"/>
</dbReference>
<protein>
    <recommendedName>
        <fullName evidence="1">Small ribosomal subunit protein bS18</fullName>
    </recommendedName>
    <alternativeName>
        <fullName evidence="2">30S ribosomal protein S18</fullName>
    </alternativeName>
</protein>
<organism>
    <name type="scientific">Coprothermobacter proteolyticus (strain ATCC 35245 / DSM 5265 / OCM 4 / BT)</name>
    <dbReference type="NCBI Taxonomy" id="309798"/>
    <lineage>
        <taxon>Bacteria</taxon>
        <taxon>Pseudomonadati</taxon>
        <taxon>Coprothermobacterota</taxon>
        <taxon>Coprothermobacteria</taxon>
        <taxon>Coprothermobacterales</taxon>
        <taxon>Coprothermobacteraceae</taxon>
        <taxon>Coprothermobacter</taxon>
    </lineage>
</organism>
<evidence type="ECO:0000255" key="1">
    <source>
        <dbReference type="HAMAP-Rule" id="MF_00270"/>
    </source>
</evidence>
<evidence type="ECO:0000305" key="2"/>
<comment type="function">
    <text evidence="1">Binds as a heterodimer with protein bS6 to the central domain of the 16S rRNA, where it helps stabilize the platform of the 30S subunit.</text>
</comment>
<comment type="subunit">
    <text evidence="1">Part of the 30S ribosomal subunit. Forms a tight heterodimer with protein bS6.</text>
</comment>
<comment type="similarity">
    <text evidence="1">Belongs to the bacterial ribosomal protein bS18 family.</text>
</comment>
<accession>B5Y876</accession>